<protein>
    <recommendedName>
        <fullName evidence="1">Glycerol-3-phosphate acyltransferase</fullName>
    </recommendedName>
    <alternativeName>
        <fullName evidence="1">Acyl-PO4 G3P acyltransferase</fullName>
    </alternativeName>
    <alternativeName>
        <fullName evidence="1">Acyl-phosphate--glycerol-3-phosphate acyltransferase</fullName>
    </alternativeName>
    <alternativeName>
        <fullName evidence="1">G3P acyltransferase</fullName>
        <shortName evidence="1">GPAT</shortName>
        <ecNumber evidence="1">2.3.1.275</ecNumber>
    </alternativeName>
    <alternativeName>
        <fullName evidence="1">Lysophosphatidic acid synthase</fullName>
        <shortName evidence="1">LPA synthase</shortName>
    </alternativeName>
</protein>
<gene>
    <name evidence="1" type="primary">plsY</name>
    <name type="ordered locus">Shewana3_3082</name>
</gene>
<name>PLSY_SHESA</name>
<evidence type="ECO:0000255" key="1">
    <source>
        <dbReference type="HAMAP-Rule" id="MF_01043"/>
    </source>
</evidence>
<organism>
    <name type="scientific">Shewanella sp. (strain ANA-3)</name>
    <dbReference type="NCBI Taxonomy" id="94122"/>
    <lineage>
        <taxon>Bacteria</taxon>
        <taxon>Pseudomonadati</taxon>
        <taxon>Pseudomonadota</taxon>
        <taxon>Gammaproteobacteria</taxon>
        <taxon>Alteromonadales</taxon>
        <taxon>Shewanellaceae</taxon>
        <taxon>Shewanella</taxon>
    </lineage>
</organism>
<keyword id="KW-0997">Cell inner membrane</keyword>
<keyword id="KW-1003">Cell membrane</keyword>
<keyword id="KW-0444">Lipid biosynthesis</keyword>
<keyword id="KW-0443">Lipid metabolism</keyword>
<keyword id="KW-0472">Membrane</keyword>
<keyword id="KW-0594">Phospholipid biosynthesis</keyword>
<keyword id="KW-1208">Phospholipid metabolism</keyword>
<keyword id="KW-0808">Transferase</keyword>
<keyword id="KW-0812">Transmembrane</keyword>
<keyword id="KW-1133">Transmembrane helix</keyword>
<accession>A0KZT7</accession>
<feature type="chain" id="PRO_1000064225" description="Glycerol-3-phosphate acyltransferase">
    <location>
        <begin position="1"/>
        <end position="203"/>
    </location>
</feature>
<feature type="transmembrane region" description="Helical" evidence="1">
    <location>
        <begin position="6"/>
        <end position="26"/>
    </location>
</feature>
<feature type="transmembrane region" description="Helical" evidence="1">
    <location>
        <begin position="82"/>
        <end position="102"/>
    </location>
</feature>
<feature type="transmembrane region" description="Helical" evidence="1">
    <location>
        <begin position="118"/>
        <end position="138"/>
    </location>
</feature>
<feature type="transmembrane region" description="Helical" evidence="1">
    <location>
        <begin position="141"/>
        <end position="161"/>
    </location>
</feature>
<proteinExistence type="inferred from homology"/>
<dbReference type="EC" id="2.3.1.275" evidence="1"/>
<dbReference type="EMBL" id="CP000469">
    <property type="protein sequence ID" value="ABK49306.1"/>
    <property type="molecule type" value="Genomic_DNA"/>
</dbReference>
<dbReference type="RefSeq" id="WP_011717922.1">
    <property type="nucleotide sequence ID" value="NC_008577.1"/>
</dbReference>
<dbReference type="SMR" id="A0KZT7"/>
<dbReference type="STRING" id="94122.Shewana3_3082"/>
<dbReference type="KEGG" id="shn:Shewana3_3082"/>
<dbReference type="eggNOG" id="COG0344">
    <property type="taxonomic scope" value="Bacteria"/>
</dbReference>
<dbReference type="HOGENOM" id="CLU_081254_0_2_6"/>
<dbReference type="OrthoDB" id="9777124at2"/>
<dbReference type="UniPathway" id="UPA00085"/>
<dbReference type="Proteomes" id="UP000002589">
    <property type="component" value="Chromosome"/>
</dbReference>
<dbReference type="GO" id="GO:0005886">
    <property type="term" value="C:plasma membrane"/>
    <property type="evidence" value="ECO:0007669"/>
    <property type="project" value="UniProtKB-SubCell"/>
</dbReference>
<dbReference type="GO" id="GO:0043772">
    <property type="term" value="F:acyl-phosphate glycerol-3-phosphate acyltransferase activity"/>
    <property type="evidence" value="ECO:0007669"/>
    <property type="project" value="UniProtKB-UniRule"/>
</dbReference>
<dbReference type="GO" id="GO:0008654">
    <property type="term" value="P:phospholipid biosynthetic process"/>
    <property type="evidence" value="ECO:0007669"/>
    <property type="project" value="UniProtKB-UniRule"/>
</dbReference>
<dbReference type="HAMAP" id="MF_01043">
    <property type="entry name" value="PlsY"/>
    <property type="match status" value="1"/>
</dbReference>
<dbReference type="InterPro" id="IPR003811">
    <property type="entry name" value="G3P_acylTferase_PlsY"/>
</dbReference>
<dbReference type="NCBIfam" id="TIGR00023">
    <property type="entry name" value="glycerol-3-phosphate 1-O-acyltransferase PlsY"/>
    <property type="match status" value="1"/>
</dbReference>
<dbReference type="PANTHER" id="PTHR30309:SF0">
    <property type="entry name" value="GLYCEROL-3-PHOSPHATE ACYLTRANSFERASE-RELATED"/>
    <property type="match status" value="1"/>
</dbReference>
<dbReference type="PANTHER" id="PTHR30309">
    <property type="entry name" value="INNER MEMBRANE PROTEIN YGIH"/>
    <property type="match status" value="1"/>
</dbReference>
<dbReference type="Pfam" id="PF02660">
    <property type="entry name" value="G3P_acyltransf"/>
    <property type="match status" value="1"/>
</dbReference>
<dbReference type="SMART" id="SM01207">
    <property type="entry name" value="G3P_acyltransf"/>
    <property type="match status" value="1"/>
</dbReference>
<comment type="function">
    <text evidence="1">Catalyzes the transfer of an acyl group from acyl-phosphate (acyl-PO(4)) to glycerol-3-phosphate (G3P) to form lysophosphatidic acid (LPA). This enzyme utilizes acyl-phosphate as fatty acyl donor, but not acyl-CoA or acyl-ACP.</text>
</comment>
<comment type="catalytic activity">
    <reaction evidence="1">
        <text>an acyl phosphate + sn-glycerol 3-phosphate = a 1-acyl-sn-glycero-3-phosphate + phosphate</text>
        <dbReference type="Rhea" id="RHEA:34075"/>
        <dbReference type="ChEBI" id="CHEBI:43474"/>
        <dbReference type="ChEBI" id="CHEBI:57597"/>
        <dbReference type="ChEBI" id="CHEBI:57970"/>
        <dbReference type="ChEBI" id="CHEBI:59918"/>
        <dbReference type="EC" id="2.3.1.275"/>
    </reaction>
</comment>
<comment type="pathway">
    <text evidence="1">Lipid metabolism; phospholipid metabolism.</text>
</comment>
<comment type="subunit">
    <text evidence="1">Probably interacts with PlsX.</text>
</comment>
<comment type="subcellular location">
    <subcellularLocation>
        <location evidence="1">Cell inner membrane</location>
        <topology evidence="1">Multi-pass membrane protein</topology>
    </subcellularLocation>
</comment>
<comment type="similarity">
    <text evidence="1">Belongs to the PlsY family.</text>
</comment>
<reference key="1">
    <citation type="submission" date="2006-09" db="EMBL/GenBank/DDBJ databases">
        <title>Complete sequence of chromosome 1 of Shewanella sp. ANA-3.</title>
        <authorList>
            <person name="Copeland A."/>
            <person name="Lucas S."/>
            <person name="Lapidus A."/>
            <person name="Barry K."/>
            <person name="Detter J.C."/>
            <person name="Glavina del Rio T."/>
            <person name="Hammon N."/>
            <person name="Israni S."/>
            <person name="Dalin E."/>
            <person name="Tice H."/>
            <person name="Pitluck S."/>
            <person name="Chertkov O."/>
            <person name="Brettin T."/>
            <person name="Bruce D."/>
            <person name="Han C."/>
            <person name="Tapia R."/>
            <person name="Gilna P."/>
            <person name="Schmutz J."/>
            <person name="Larimer F."/>
            <person name="Land M."/>
            <person name="Hauser L."/>
            <person name="Kyrpides N."/>
            <person name="Kim E."/>
            <person name="Newman D."/>
            <person name="Salticov C."/>
            <person name="Konstantinidis K."/>
            <person name="Klappenback J."/>
            <person name="Tiedje J."/>
            <person name="Richardson P."/>
        </authorList>
    </citation>
    <scope>NUCLEOTIDE SEQUENCE [LARGE SCALE GENOMIC DNA]</scope>
    <source>
        <strain>ANA-3</strain>
    </source>
</reference>
<sequence length="203" mass="21669">MSQLTLTLLMIVAAYLAGSVSSAVLVCRMRGLPDPRLQGSGNPGATNVLRIGGASSAAMVLFFDMLKGALPTYLAYLMGIDAISLGLIAIAACLGHIYPIFFGFKGGKGVATAFGAMAPIGDDLAICLMASWVVLVLISRYSSLAAIITALLAPLYTWWLDDRFTIPVAMLSTLIIIRHKENIQRLLKGEESKVSRKKRPKAP</sequence>